<comment type="function">
    <text evidence="1">Converts 2C-methyl-D-erythritol 2,4-cyclodiphosphate (ME-2,4cPP) into 1-hydroxy-2-methyl-2-(E)-butenyl 4-diphosphate.</text>
</comment>
<comment type="catalytic activity">
    <reaction evidence="1">
        <text>(2E)-4-hydroxy-3-methylbut-2-enyl diphosphate + oxidized [flavodoxin] + H2O + 2 H(+) = 2-C-methyl-D-erythritol 2,4-cyclic diphosphate + reduced [flavodoxin]</text>
        <dbReference type="Rhea" id="RHEA:43604"/>
        <dbReference type="Rhea" id="RHEA-COMP:10622"/>
        <dbReference type="Rhea" id="RHEA-COMP:10623"/>
        <dbReference type="ChEBI" id="CHEBI:15377"/>
        <dbReference type="ChEBI" id="CHEBI:15378"/>
        <dbReference type="ChEBI" id="CHEBI:57618"/>
        <dbReference type="ChEBI" id="CHEBI:58210"/>
        <dbReference type="ChEBI" id="CHEBI:58483"/>
        <dbReference type="ChEBI" id="CHEBI:128753"/>
        <dbReference type="EC" id="1.17.7.3"/>
    </reaction>
</comment>
<comment type="cofactor">
    <cofactor evidence="1">
        <name>[4Fe-4S] cluster</name>
        <dbReference type="ChEBI" id="CHEBI:49883"/>
    </cofactor>
    <text evidence="1">Binds 1 [4Fe-4S] cluster.</text>
</comment>
<comment type="pathway">
    <text evidence="1">Isoprenoid biosynthesis; isopentenyl diphosphate biosynthesis via DXP pathway; isopentenyl diphosphate from 1-deoxy-D-xylulose 5-phosphate: step 5/6.</text>
</comment>
<comment type="similarity">
    <text evidence="1">Belongs to the IspG family.</text>
</comment>
<keyword id="KW-0004">4Fe-4S</keyword>
<keyword id="KW-0408">Iron</keyword>
<keyword id="KW-0411">Iron-sulfur</keyword>
<keyword id="KW-0414">Isoprene biosynthesis</keyword>
<keyword id="KW-0479">Metal-binding</keyword>
<keyword id="KW-0560">Oxidoreductase</keyword>
<keyword id="KW-1185">Reference proteome</keyword>
<proteinExistence type="inferred from homology"/>
<protein>
    <recommendedName>
        <fullName evidence="1">4-hydroxy-3-methylbut-2-en-1-yl diphosphate synthase (flavodoxin)</fullName>
        <ecNumber evidence="1">1.17.7.3</ecNumber>
    </recommendedName>
    <alternativeName>
        <fullName evidence="1">1-hydroxy-2-methyl-2-(E)-butenyl 4-diphosphate synthase</fullName>
    </alternativeName>
</protein>
<evidence type="ECO:0000255" key="1">
    <source>
        <dbReference type="HAMAP-Rule" id="MF_00159"/>
    </source>
</evidence>
<feature type="chain" id="PRO_0000190552" description="4-hydroxy-3-methylbut-2-en-1-yl diphosphate synthase (flavodoxin)">
    <location>
        <begin position="1"/>
        <end position="416"/>
    </location>
</feature>
<feature type="binding site" evidence="1">
    <location>
        <position position="304"/>
    </location>
    <ligand>
        <name>[4Fe-4S] cluster</name>
        <dbReference type="ChEBI" id="CHEBI:49883"/>
    </ligand>
</feature>
<feature type="binding site" evidence="1">
    <location>
        <position position="307"/>
    </location>
    <ligand>
        <name>[4Fe-4S] cluster</name>
        <dbReference type="ChEBI" id="CHEBI:49883"/>
    </ligand>
</feature>
<feature type="binding site" evidence="1">
    <location>
        <position position="350"/>
    </location>
    <ligand>
        <name>[4Fe-4S] cluster</name>
        <dbReference type="ChEBI" id="CHEBI:49883"/>
    </ligand>
</feature>
<feature type="binding site" evidence="1">
    <location>
        <position position="357"/>
    </location>
    <ligand>
        <name>[4Fe-4S] cluster</name>
        <dbReference type="ChEBI" id="CHEBI:49883"/>
    </ligand>
</feature>
<gene>
    <name evidence="1" type="primary">ispG</name>
    <name type="ordered locus">BPSL1513</name>
</gene>
<organism>
    <name type="scientific">Burkholderia pseudomallei (strain K96243)</name>
    <dbReference type="NCBI Taxonomy" id="272560"/>
    <lineage>
        <taxon>Bacteria</taxon>
        <taxon>Pseudomonadati</taxon>
        <taxon>Pseudomonadota</taxon>
        <taxon>Betaproteobacteria</taxon>
        <taxon>Burkholderiales</taxon>
        <taxon>Burkholderiaceae</taxon>
        <taxon>Burkholderia</taxon>
        <taxon>pseudomallei group</taxon>
    </lineage>
</organism>
<dbReference type="EC" id="1.17.7.3" evidence="1"/>
<dbReference type="EMBL" id="BX571965">
    <property type="protein sequence ID" value="CAH35514.1"/>
    <property type="molecule type" value="Genomic_DNA"/>
</dbReference>
<dbReference type="RefSeq" id="YP_108133.1">
    <property type="nucleotide sequence ID" value="NC_006350.1"/>
</dbReference>
<dbReference type="SMR" id="Q63UT3"/>
<dbReference type="STRING" id="272560.BPSL1513"/>
<dbReference type="KEGG" id="bps:BPSL1513"/>
<dbReference type="PATRIC" id="fig|272560.6.peg.1700"/>
<dbReference type="eggNOG" id="COG0821">
    <property type="taxonomic scope" value="Bacteria"/>
</dbReference>
<dbReference type="UniPathway" id="UPA00056">
    <property type="reaction ID" value="UER00096"/>
</dbReference>
<dbReference type="Proteomes" id="UP000000605">
    <property type="component" value="Chromosome 1"/>
</dbReference>
<dbReference type="GO" id="GO:0051539">
    <property type="term" value="F:4 iron, 4 sulfur cluster binding"/>
    <property type="evidence" value="ECO:0007669"/>
    <property type="project" value="UniProtKB-UniRule"/>
</dbReference>
<dbReference type="GO" id="GO:0046429">
    <property type="term" value="F:4-hydroxy-3-methylbut-2-en-1-yl diphosphate synthase activity (ferredoxin)"/>
    <property type="evidence" value="ECO:0007669"/>
    <property type="project" value="UniProtKB-UniRule"/>
</dbReference>
<dbReference type="GO" id="GO:0141197">
    <property type="term" value="F:4-hydroxy-3-methylbut-2-enyl-diphosphate synthase activity (flavodoxin)"/>
    <property type="evidence" value="ECO:0007669"/>
    <property type="project" value="UniProtKB-EC"/>
</dbReference>
<dbReference type="GO" id="GO:0005506">
    <property type="term" value="F:iron ion binding"/>
    <property type="evidence" value="ECO:0007669"/>
    <property type="project" value="InterPro"/>
</dbReference>
<dbReference type="GO" id="GO:0019288">
    <property type="term" value="P:isopentenyl diphosphate biosynthetic process, methylerythritol 4-phosphate pathway"/>
    <property type="evidence" value="ECO:0007669"/>
    <property type="project" value="UniProtKB-UniRule"/>
</dbReference>
<dbReference type="GO" id="GO:0016114">
    <property type="term" value="P:terpenoid biosynthetic process"/>
    <property type="evidence" value="ECO:0007669"/>
    <property type="project" value="InterPro"/>
</dbReference>
<dbReference type="FunFam" id="3.30.413.10:FF:000012">
    <property type="entry name" value="4-hydroxy-3-methylbut-2-en-1-yl diphosphate synthase (flavodoxin)"/>
    <property type="match status" value="1"/>
</dbReference>
<dbReference type="Gene3D" id="3.20.20.20">
    <property type="entry name" value="Dihydropteroate synthase-like"/>
    <property type="match status" value="1"/>
</dbReference>
<dbReference type="Gene3D" id="3.30.413.10">
    <property type="entry name" value="Sulfite Reductase Hemoprotein, domain 1"/>
    <property type="match status" value="1"/>
</dbReference>
<dbReference type="HAMAP" id="MF_00159">
    <property type="entry name" value="IspG"/>
    <property type="match status" value="1"/>
</dbReference>
<dbReference type="InterPro" id="IPR011005">
    <property type="entry name" value="Dihydropteroate_synth-like_sf"/>
</dbReference>
<dbReference type="InterPro" id="IPR016425">
    <property type="entry name" value="IspG_bac"/>
</dbReference>
<dbReference type="InterPro" id="IPR004588">
    <property type="entry name" value="IspG_bac-typ"/>
</dbReference>
<dbReference type="InterPro" id="IPR045854">
    <property type="entry name" value="NO2/SO3_Rdtase_4Fe4S_sf"/>
</dbReference>
<dbReference type="NCBIfam" id="TIGR00612">
    <property type="entry name" value="ispG_gcpE"/>
    <property type="match status" value="1"/>
</dbReference>
<dbReference type="NCBIfam" id="NF001540">
    <property type="entry name" value="PRK00366.1"/>
    <property type="match status" value="1"/>
</dbReference>
<dbReference type="PANTHER" id="PTHR30454">
    <property type="entry name" value="4-HYDROXY-3-METHYLBUT-2-EN-1-YL DIPHOSPHATE SYNTHASE"/>
    <property type="match status" value="1"/>
</dbReference>
<dbReference type="PANTHER" id="PTHR30454:SF0">
    <property type="entry name" value="4-HYDROXY-3-METHYLBUT-2-EN-1-YL DIPHOSPHATE SYNTHASE (FERREDOXIN), CHLOROPLASTIC"/>
    <property type="match status" value="1"/>
</dbReference>
<dbReference type="Pfam" id="PF04551">
    <property type="entry name" value="GcpE"/>
    <property type="match status" value="1"/>
</dbReference>
<dbReference type="PIRSF" id="PIRSF004640">
    <property type="entry name" value="IspG"/>
    <property type="match status" value="1"/>
</dbReference>
<dbReference type="SUPFAM" id="SSF56014">
    <property type="entry name" value="Nitrite and sulphite reductase 4Fe-4S domain-like"/>
    <property type="match status" value="1"/>
</dbReference>
<accession>Q63UT3</accession>
<name>ISPG_BURPS</name>
<reference key="1">
    <citation type="journal article" date="2004" name="Proc. Natl. Acad. Sci. U.S.A.">
        <title>Genomic plasticity of the causative agent of melioidosis, Burkholderia pseudomallei.</title>
        <authorList>
            <person name="Holden M.T.G."/>
            <person name="Titball R.W."/>
            <person name="Peacock S.J."/>
            <person name="Cerdeno-Tarraga A.-M."/>
            <person name="Atkins T."/>
            <person name="Crossman L.C."/>
            <person name="Pitt T."/>
            <person name="Churcher C."/>
            <person name="Mungall K.L."/>
            <person name="Bentley S.D."/>
            <person name="Sebaihia M."/>
            <person name="Thomson N.R."/>
            <person name="Bason N."/>
            <person name="Beacham I.R."/>
            <person name="Brooks K."/>
            <person name="Brown K.A."/>
            <person name="Brown N.F."/>
            <person name="Challis G.L."/>
            <person name="Cherevach I."/>
            <person name="Chillingworth T."/>
            <person name="Cronin A."/>
            <person name="Crossett B."/>
            <person name="Davis P."/>
            <person name="DeShazer D."/>
            <person name="Feltwell T."/>
            <person name="Fraser A."/>
            <person name="Hance Z."/>
            <person name="Hauser H."/>
            <person name="Holroyd S."/>
            <person name="Jagels K."/>
            <person name="Keith K.E."/>
            <person name="Maddison M."/>
            <person name="Moule S."/>
            <person name="Price C."/>
            <person name="Quail M.A."/>
            <person name="Rabbinowitsch E."/>
            <person name="Rutherford K."/>
            <person name="Sanders M."/>
            <person name="Simmonds M."/>
            <person name="Songsivilai S."/>
            <person name="Stevens K."/>
            <person name="Tumapa S."/>
            <person name="Vesaratchavest M."/>
            <person name="Whitehead S."/>
            <person name="Yeats C."/>
            <person name="Barrell B.G."/>
            <person name="Oyston P.C.F."/>
            <person name="Parkhill J."/>
        </authorList>
    </citation>
    <scope>NUCLEOTIDE SEQUENCE [LARGE SCALE GENOMIC DNA]</scope>
    <source>
        <strain>K96243</strain>
    </source>
</reference>
<sequence>MFGGHAPRRVSHAVDVRWGGTLVTIGGAAPVRVQSMTNTDTADAIGTAIQVKELANAGSELVRITVNTPEAAAAVPAIREQLDRMGVTVPLVGDFHYNGHLLLRDYPDCAQALSKYRINPGNVGQGAKRDSQFAQMIEAAIKYDKPVRIGVNWGSLDQDLLARMMDENGARAEPWEAQSVMYEALIQSAIGSAERAVELGLGRDKIVLSCKVSGVQDLVAVYRELSRRCGFALHLGLTEAGMGSKGIVASTAAIGLLLQEGIGDTIRISLTPEPGAPRTGEVVVGQEILQTMGLRSFAPMVVACPGCGRTTSTLFQELALRIQTYLREQMPVWRSEYPGVEKMNVAVMGCIVNGPGESKHANIGISLPGSGENPAAPVFVDGEKVKTLRGEHIAEEFQQIVSDYVARTYGRAAAQN</sequence>